<feature type="chain" id="PRO_0000040556" description="Helper component proteinase" evidence="1">
    <location>
        <begin position="1"/>
        <end position="255"/>
    </location>
</feature>
<feature type="chain" id="PRO_0000040557" description="70 kDa protein">
    <location>
        <begin position="256"/>
        <end position="890"/>
    </location>
</feature>
<feature type="domain" description="Peptidase C6" evidence="2">
    <location>
        <begin position="135"/>
        <end position="255"/>
    </location>
</feature>
<feature type="region of interest" description="Disordered" evidence="3">
    <location>
        <begin position="507"/>
        <end position="533"/>
    </location>
</feature>
<feature type="compositionally biased region" description="Pro residues" evidence="3">
    <location>
        <begin position="515"/>
        <end position="528"/>
    </location>
</feature>
<feature type="active site" description="For helper component proteinase activity" evidence="2">
    <location>
        <position position="143"/>
    </location>
</feature>
<feature type="active site" description="For helper component proteinase activity" evidence="2">
    <location>
        <position position="215"/>
    </location>
</feature>
<feature type="site" description="Cleavage; by autolysis" evidence="2">
    <location>
        <begin position="255"/>
        <end position="256"/>
    </location>
</feature>
<protein>
    <recommendedName>
        <fullName>Genome polyprotein 2</fullName>
    </recommendedName>
    <component>
        <recommendedName>
            <fullName>Helper component proteinase</fullName>
            <shortName>HC-pro</shortName>
            <ecNumber>3.4.22.45</ecNumber>
        </recommendedName>
    </component>
    <component>
        <recommendedName>
            <fullName>70 kDa protein</fullName>
        </recommendedName>
    </component>
</protein>
<gene>
    <name type="primary">RNA2</name>
</gene>
<sequence>MSASSSRQLFDCGSLDWPNKSLFGDPTTRDVMHEHISSTWNAVIRRHMLAPNADAETILGRDGLPSAQFDAYGAMLPSFIQALNAPTTRLRITHRCPTAESILCADASHAPWLYMANNVCAYEATHLKPVQTFIAFDFAHGYCYLSLFIPLSFRITFENARSFSRFLEQLPDILGAYPTLAAIYKTMLFAIRLFPEVLQAPIPIIAKRPGVLQFHVSDARGLPPSWFPMKCGSVRSFVALITNNLNSDLLDGIVGSNGDGEHYTNWNSGHDHWIVNRFITVRDLHSSLKSALDVDLDTEGGRNAVLDLLLDLGVTNLVRREKRFPAHFQGAESVYLLLSCERVGNELVAVQDALQEPLANHSGLDLRALIINLGGLPSRHSDICYTRNIFENDNHLVWNFEFYRIASITRNAQIDRDMLSSSMANLFSNFVSESSNGQYRVKEPRPIAQYRVEHDEPVASGAPSAWWQVLIGITTAILGAIIFFLWRCFLRAKRVKFQAKDSFPWFTTSGDDDSPPPPGDSPSHPPGRSPDRVLPRTVVRDLSFNDDDDLHSVDLDEAGSRFGEVVSLIARGNLRELAGAIPESLSNLTLLQTSASGSGFYTMVALYLATLGDAITAFHEHNDASPTTTQSLRTVELQLEARGLRFNEAGTPANLIQRGVNSSVGRALVRLTQSALLATGEKFRTRMATTLERIAAERLNTLTAYDQRVIEMTTELLAAIKTALEVERSELTPHLANAEALLQVYNNLFSTDYASASLLALRREMILRSAEGRVGEQPTSASDAANEELVQRSMTKLDKEIELFQAQIDSQRRAVTITEASNLRENILQPINTVANIAMAGAFLRGGARHRMPGMPDVAAPMPNPFRAFSGRGHSLTTTRSGGLFRRPRV</sequence>
<accession>Q01207</accession>
<proteinExistence type="inferred from homology"/>
<dbReference type="EC" id="3.4.22.45"/>
<dbReference type="EMBL" id="D01092">
    <property type="protein sequence ID" value="BAA00876.1"/>
    <property type="molecule type" value="Genomic_RNA"/>
</dbReference>
<dbReference type="SMR" id="Q01207"/>
<dbReference type="MEROPS" id="C06.002"/>
<dbReference type="Proteomes" id="UP000007447">
    <property type="component" value="Genome"/>
</dbReference>
<dbReference type="GO" id="GO:0004197">
    <property type="term" value="F:cysteine-type endopeptidase activity"/>
    <property type="evidence" value="ECO:0007669"/>
    <property type="project" value="InterPro"/>
</dbReference>
<dbReference type="GO" id="GO:0005198">
    <property type="term" value="F:structural molecule activity"/>
    <property type="evidence" value="ECO:0007669"/>
    <property type="project" value="InterPro"/>
</dbReference>
<dbReference type="GO" id="GO:0006508">
    <property type="term" value="P:proteolysis"/>
    <property type="evidence" value="ECO:0007669"/>
    <property type="project" value="UniProtKB-KW"/>
</dbReference>
<dbReference type="Gene3D" id="3.90.70.150">
    <property type="entry name" value="Helper component proteinase"/>
    <property type="match status" value="1"/>
</dbReference>
<dbReference type="Gene3D" id="1.20.120.70">
    <property type="entry name" value="Tobacco mosaic virus-like, coat protein"/>
    <property type="match status" value="1"/>
</dbReference>
<dbReference type="InterPro" id="IPR001456">
    <property type="entry name" value="HC-pro"/>
</dbReference>
<dbReference type="InterPro" id="IPR031159">
    <property type="entry name" value="HC_PRO_CPD_dom"/>
</dbReference>
<dbReference type="InterPro" id="IPR042308">
    <property type="entry name" value="HC_PRO_CPD_sf"/>
</dbReference>
<dbReference type="InterPro" id="IPR001337">
    <property type="entry name" value="TMV-like_coat"/>
</dbReference>
<dbReference type="InterPro" id="IPR036417">
    <property type="entry name" value="TMV-like_coat_sf"/>
</dbReference>
<dbReference type="Pfam" id="PF00851">
    <property type="entry name" value="Peptidase_C6"/>
    <property type="match status" value="1"/>
</dbReference>
<dbReference type="Pfam" id="PF00721">
    <property type="entry name" value="TMV_coat"/>
    <property type="match status" value="1"/>
</dbReference>
<dbReference type="SUPFAM" id="SSF47195">
    <property type="entry name" value="TMV-like viral coat proteins"/>
    <property type="match status" value="1"/>
</dbReference>
<dbReference type="PROSITE" id="PS51744">
    <property type="entry name" value="HC_PRO_CPD"/>
    <property type="match status" value="1"/>
</dbReference>
<name>POL2_BAYMJ</name>
<organismHost>
    <name type="scientific">Hordeum vulgare</name>
    <name type="common">Barley</name>
    <dbReference type="NCBI Taxonomy" id="4513"/>
</organismHost>
<reference key="1">
    <citation type="journal article" date="1991" name="J. Gen. Virol.">
        <title>Nucleotide sequence of barley yellow mosaic virus RNA 2.</title>
        <authorList>
            <person name="Kashiwazaki S."/>
            <person name="Minobe Y."/>
            <person name="Hibino H."/>
        </authorList>
    </citation>
    <scope>NUCLEOTIDE SEQUENCE [GENOMIC RNA]</scope>
</reference>
<organism>
    <name type="scientific">Barley yellow mosaic virus (strain Japanese II-1)</name>
    <name type="common">BaYMV</name>
    <dbReference type="NCBI Taxonomy" id="31729"/>
    <lineage>
        <taxon>Viruses</taxon>
        <taxon>Riboviria</taxon>
        <taxon>Orthornavirae</taxon>
        <taxon>Pisuviricota</taxon>
        <taxon>Stelpaviricetes</taxon>
        <taxon>Patatavirales</taxon>
        <taxon>Potyviridae</taxon>
        <taxon>Bymovirus</taxon>
        <taxon>Barley yellow mosaic virus</taxon>
    </lineage>
</organism>
<evidence type="ECO:0000255" key="1"/>
<evidence type="ECO:0000255" key="2">
    <source>
        <dbReference type="PROSITE-ProRule" id="PRU01080"/>
    </source>
</evidence>
<evidence type="ECO:0000256" key="3">
    <source>
        <dbReference type="SAM" id="MobiDB-lite"/>
    </source>
</evidence>
<evidence type="ECO:0000305" key="4"/>
<comment type="catalytic activity">
    <reaction>
        <text>Hydrolyzes a Gly-|-Gly bond at its own C-terminus, commonly in the sequence -Tyr-Xaa-Val-Gly-|-Gly, in the processing of the potyviral polyprotein.</text>
        <dbReference type="EC" id="3.4.22.45"/>
    </reaction>
</comment>
<comment type="PTM">
    <text evidence="4">The viral RNA2 of bymoviruses is expressed as a single polyprotein which undergoes post-translational proteolytic processing resulting in the production of at least two individual proteins. The HC-pro cleaves its C-terminus autocatalytically (Potential).</text>
</comment>
<comment type="similarity">
    <text evidence="4">Belongs to the bymoviruses polyprotein 2 family.</text>
</comment>
<keyword id="KW-0378">Hydrolase</keyword>
<keyword id="KW-0645">Protease</keyword>
<keyword id="KW-0788">Thiol protease</keyword>